<sequence>MKTLLLTLVVVTIVCLDLGYTLKCNQLIPIASKTCPAGKNLCYKMFMMSDLTIPVKRGCIDVCPKNSLLVKYVCCNTDRCN</sequence>
<keyword id="KW-0025">Alternative splicing</keyword>
<keyword id="KW-0123">Cardiotoxin</keyword>
<keyword id="KW-0204">Cytolysis</keyword>
<keyword id="KW-1015">Disulfide bond</keyword>
<keyword id="KW-0472">Membrane</keyword>
<keyword id="KW-0964">Secreted</keyword>
<keyword id="KW-0732">Signal</keyword>
<keyword id="KW-1052">Target cell membrane</keyword>
<keyword id="KW-1053">Target membrane</keyword>
<keyword id="KW-0800">Toxin</keyword>
<organism>
    <name type="scientific">Naja atra</name>
    <name type="common">Chinese cobra</name>
    <dbReference type="NCBI Taxonomy" id="8656"/>
    <lineage>
        <taxon>Eukaryota</taxon>
        <taxon>Metazoa</taxon>
        <taxon>Chordata</taxon>
        <taxon>Craniata</taxon>
        <taxon>Vertebrata</taxon>
        <taxon>Euteleostomi</taxon>
        <taxon>Lepidosauria</taxon>
        <taxon>Squamata</taxon>
        <taxon>Bifurcata</taxon>
        <taxon>Unidentata</taxon>
        <taxon>Episquamata</taxon>
        <taxon>Toxicofera</taxon>
        <taxon>Serpentes</taxon>
        <taxon>Colubroidea</taxon>
        <taxon>Elapidae</taxon>
        <taxon>Elapinae</taxon>
        <taxon>Naja</taxon>
    </lineage>
</organism>
<name>3SA1D_NAJAT</name>
<dbReference type="EMBL" id="U58484">
    <property type="protein sequence ID" value="AAB18380.1"/>
    <property type="molecule type" value="mRNA"/>
</dbReference>
<dbReference type="EMBL" id="U44727">
    <property type="protein sequence ID" value="AAA90960.1"/>
    <property type="molecule type" value="mRNA"/>
</dbReference>
<dbReference type="SMR" id="Q98958"/>
<dbReference type="GO" id="GO:0005576">
    <property type="term" value="C:extracellular region"/>
    <property type="evidence" value="ECO:0007669"/>
    <property type="project" value="UniProtKB-SubCell"/>
</dbReference>
<dbReference type="GO" id="GO:0016020">
    <property type="term" value="C:membrane"/>
    <property type="evidence" value="ECO:0007669"/>
    <property type="project" value="UniProtKB-KW"/>
</dbReference>
<dbReference type="GO" id="GO:0044218">
    <property type="term" value="C:other organism cell membrane"/>
    <property type="evidence" value="ECO:0007669"/>
    <property type="project" value="UniProtKB-KW"/>
</dbReference>
<dbReference type="GO" id="GO:0090729">
    <property type="term" value="F:toxin activity"/>
    <property type="evidence" value="ECO:0007669"/>
    <property type="project" value="UniProtKB-KW"/>
</dbReference>
<dbReference type="GO" id="GO:0031640">
    <property type="term" value="P:killing of cells of another organism"/>
    <property type="evidence" value="ECO:0007669"/>
    <property type="project" value="UniProtKB-KW"/>
</dbReference>
<dbReference type="CDD" id="cd00206">
    <property type="entry name" value="TFP_snake_toxin"/>
    <property type="match status" value="1"/>
</dbReference>
<dbReference type="FunFam" id="2.10.60.10:FF:000024">
    <property type="entry name" value="Cytotoxin 1"/>
    <property type="match status" value="1"/>
</dbReference>
<dbReference type="Gene3D" id="2.10.60.10">
    <property type="entry name" value="CD59"/>
    <property type="match status" value="1"/>
</dbReference>
<dbReference type="InterPro" id="IPR003572">
    <property type="entry name" value="Cytotoxin_Cobra"/>
</dbReference>
<dbReference type="InterPro" id="IPR003571">
    <property type="entry name" value="Snake_3FTx"/>
</dbReference>
<dbReference type="InterPro" id="IPR045860">
    <property type="entry name" value="Snake_toxin-like_sf"/>
</dbReference>
<dbReference type="InterPro" id="IPR018354">
    <property type="entry name" value="Snake_toxin_con_site"/>
</dbReference>
<dbReference type="InterPro" id="IPR054131">
    <property type="entry name" value="Toxin_cobra-type"/>
</dbReference>
<dbReference type="Pfam" id="PF21947">
    <property type="entry name" value="Toxin_cobra-type"/>
    <property type="match status" value="1"/>
</dbReference>
<dbReference type="PRINTS" id="PR00282">
    <property type="entry name" value="CYTOTOXIN"/>
</dbReference>
<dbReference type="SUPFAM" id="SSF57302">
    <property type="entry name" value="Snake toxin-like"/>
    <property type="match status" value="1"/>
</dbReference>
<dbReference type="PROSITE" id="PS00272">
    <property type="entry name" value="SNAKE_TOXIN"/>
    <property type="match status" value="1"/>
</dbReference>
<evidence type="ECO:0000250" key="1"/>
<evidence type="ECO:0000250" key="2">
    <source>
        <dbReference type="UniProtKB" id="P60301"/>
    </source>
</evidence>
<evidence type="ECO:0000250" key="3">
    <source>
        <dbReference type="UniProtKB" id="P60304"/>
    </source>
</evidence>
<evidence type="ECO:0000303" key="4">
    <source ref="1"/>
</evidence>
<evidence type="ECO:0000305" key="5"/>
<feature type="signal peptide" evidence="1">
    <location>
        <begin position="1"/>
        <end position="21"/>
    </location>
</feature>
<feature type="chain" id="PRO_0000035369" description="Cytotoxin 1d/1e">
    <location>
        <begin position="22"/>
        <end position="81"/>
    </location>
</feature>
<feature type="disulfide bond" evidence="2">
    <location>
        <begin position="24"/>
        <end position="42"/>
    </location>
</feature>
<feature type="disulfide bond" evidence="2">
    <location>
        <begin position="35"/>
        <end position="59"/>
    </location>
</feature>
<feature type="disulfide bond" evidence="2">
    <location>
        <begin position="63"/>
        <end position="74"/>
    </location>
</feature>
<feature type="disulfide bond" evidence="2">
    <location>
        <begin position="75"/>
        <end position="80"/>
    </location>
</feature>
<feature type="splice variant" id="VSP_009329" description="In isoform 2." evidence="4">
    <original>L</original>
    <variation>LTIVCLDLGYTLKCNQL</variation>
    <location>
        <position position="27"/>
    </location>
</feature>
<protein>
    <recommendedName>
        <fullName>Cytotoxin 1d/1e</fullName>
    </recommendedName>
    <alternativeName>
        <fullName>Cardiotoxin-1d/1e</fullName>
    </alternativeName>
</protein>
<reference key="1">
    <citation type="submission" date="1996-05" db="EMBL/GenBank/DDBJ databases">
        <authorList>
            <person name="Chu R.C."/>
            <person name="Yang C.-C."/>
        </authorList>
    </citation>
    <scope>NUCLEOTIDE SEQUENCE [MRNA] (ISOFORMS 1 AND 2)</scope>
    <source>
        <tissue>Venom gland</tissue>
    </source>
</reference>
<accession>Q98958</accession>
<accession>Q91125</accession>
<proteinExistence type="inferred from homology"/>
<comment type="function">
    <text evidence="2 3">Shows cytolytic activity on many different cells by forming pore in lipid membranes. In vivo, increases heart rate or kills the animal by cardiac arrest. In addition, it binds to heparin with high affinity, interacts with Kv channel-interacting protein 1 (KCNIP1) in a calcium-independent manner, and binds to integrin alpha-V/beta-3 (ITGAV/ITGB3) with moderate affinity.</text>
</comment>
<comment type="subunit">
    <text evidence="2">Monomer in solution; Homodimer and oligomer in the presence of negatively charged lipids forming a pore with a size ranging between 20 and 30 Angstroms.</text>
</comment>
<comment type="subcellular location">
    <subcellularLocation>
        <location evidence="1">Secreted</location>
    </subcellularLocation>
    <subcellularLocation>
        <location evidence="2">Target cell membrane</location>
    </subcellularLocation>
</comment>
<comment type="alternative products">
    <event type="alternative splicing"/>
    <isoform>
        <id>Q98958-1</id>
        <name>1</name>
        <name>Cardiotoxin 1d</name>
        <sequence type="displayed"/>
    </isoform>
    <isoform>
        <id>Q98958-2</id>
        <name>2</name>
        <name>Cardiotoxin 1e</name>
        <sequence type="described" ref="VSP_009329"/>
    </isoform>
</comment>
<comment type="tissue specificity">
    <text evidence="5">Expressed by the venom gland.</text>
</comment>
<comment type="similarity">
    <text evidence="5">Belongs to the three-finger toxin family. Short-chain subfamily. Type IA cytotoxin sub-subfamily.</text>
</comment>